<evidence type="ECO:0000250" key="1"/>
<evidence type="ECO:0000255" key="2"/>
<evidence type="ECO:0000256" key="3">
    <source>
        <dbReference type="SAM" id="MobiDB-lite"/>
    </source>
</evidence>
<evidence type="ECO:0000305" key="4"/>
<organism>
    <name type="scientific">Xenopus laevis</name>
    <name type="common">African clawed frog</name>
    <dbReference type="NCBI Taxonomy" id="8355"/>
    <lineage>
        <taxon>Eukaryota</taxon>
        <taxon>Metazoa</taxon>
        <taxon>Chordata</taxon>
        <taxon>Craniata</taxon>
        <taxon>Vertebrata</taxon>
        <taxon>Euteleostomi</taxon>
        <taxon>Amphibia</taxon>
        <taxon>Batrachia</taxon>
        <taxon>Anura</taxon>
        <taxon>Pipoidea</taxon>
        <taxon>Pipidae</taxon>
        <taxon>Xenopodinae</taxon>
        <taxon>Xenopus</taxon>
        <taxon>Xenopus</taxon>
    </lineage>
</organism>
<reference key="1">
    <citation type="journal article" date="1995" name="Am. J. Physiol.">
        <title>Primary structure and functional expression of the mouse and frog alpha-subunit of the gastric H(+)-K(+)-ATPase.</title>
        <authorList>
            <person name="Mathews P.M."/>
            <person name="Claeys D."/>
            <person name="Jaisser F."/>
            <person name="Geering K."/>
            <person name="Horisberger J.-D."/>
            <person name="Kraehenbuhl J.-P."/>
            <person name="Rossier B.C."/>
        </authorList>
    </citation>
    <scope>NUCLEOTIDE SEQUENCE [MRNA]</scope>
    <source>
        <tissue>Gastric mucosa</tissue>
    </source>
</reference>
<dbReference type="EC" id="7.2.2.19"/>
<dbReference type="EMBL" id="U17249">
    <property type="protein sequence ID" value="AAA76601.1"/>
    <property type="molecule type" value="mRNA"/>
</dbReference>
<dbReference type="PIR" id="I51674">
    <property type="entry name" value="I51674"/>
</dbReference>
<dbReference type="RefSeq" id="NP_001084343.1">
    <property type="nucleotide sequence ID" value="NM_001090874.1"/>
</dbReference>
<dbReference type="SMR" id="Q92126"/>
<dbReference type="GeneID" id="399450"/>
<dbReference type="CTD" id="399450"/>
<dbReference type="Proteomes" id="UP000186698">
    <property type="component" value="Unplaced"/>
</dbReference>
<dbReference type="GO" id="GO:0005886">
    <property type="term" value="C:plasma membrane"/>
    <property type="evidence" value="ECO:0000318"/>
    <property type="project" value="GO_Central"/>
</dbReference>
<dbReference type="GO" id="GO:0005524">
    <property type="term" value="F:ATP binding"/>
    <property type="evidence" value="ECO:0007669"/>
    <property type="project" value="UniProtKB-KW"/>
</dbReference>
<dbReference type="GO" id="GO:0016887">
    <property type="term" value="F:ATP hydrolysis activity"/>
    <property type="evidence" value="ECO:0007669"/>
    <property type="project" value="InterPro"/>
</dbReference>
<dbReference type="GO" id="GO:0046872">
    <property type="term" value="F:metal ion binding"/>
    <property type="evidence" value="ECO:0007669"/>
    <property type="project" value="UniProtKB-KW"/>
</dbReference>
<dbReference type="GO" id="GO:0008900">
    <property type="term" value="F:P-type potassium:proton transporter activity"/>
    <property type="evidence" value="ECO:0000318"/>
    <property type="project" value="GO_Central"/>
</dbReference>
<dbReference type="GO" id="GO:0005391">
    <property type="term" value="F:P-type sodium:potassium-exchanging transporter activity"/>
    <property type="evidence" value="ECO:0000318"/>
    <property type="project" value="GO_Central"/>
</dbReference>
<dbReference type="GO" id="GO:0030007">
    <property type="term" value="P:intracellular potassium ion homeostasis"/>
    <property type="evidence" value="ECO:0000318"/>
    <property type="project" value="GO_Central"/>
</dbReference>
<dbReference type="GO" id="GO:0006883">
    <property type="term" value="P:intracellular sodium ion homeostasis"/>
    <property type="evidence" value="ECO:0000318"/>
    <property type="project" value="GO_Central"/>
</dbReference>
<dbReference type="GO" id="GO:1990573">
    <property type="term" value="P:potassium ion import across plasma membrane"/>
    <property type="evidence" value="ECO:0000318"/>
    <property type="project" value="GO_Central"/>
</dbReference>
<dbReference type="GO" id="GO:1902600">
    <property type="term" value="P:proton transmembrane transport"/>
    <property type="evidence" value="ECO:0000318"/>
    <property type="project" value="GO_Central"/>
</dbReference>
<dbReference type="GO" id="GO:0036376">
    <property type="term" value="P:sodium ion export across plasma membrane"/>
    <property type="evidence" value="ECO:0000318"/>
    <property type="project" value="GO_Central"/>
</dbReference>
<dbReference type="CDD" id="cd02608">
    <property type="entry name" value="P-type_ATPase_Na-K_like"/>
    <property type="match status" value="1"/>
</dbReference>
<dbReference type="FunFam" id="3.40.50.1000:FF:000001">
    <property type="entry name" value="Phospholipid-transporting ATPase IC"/>
    <property type="match status" value="1"/>
</dbReference>
<dbReference type="FunFam" id="1.20.1110.10:FF:000079">
    <property type="entry name" value="Sodium/potassium-transporting ATPase subunit alpha"/>
    <property type="match status" value="1"/>
</dbReference>
<dbReference type="FunFam" id="2.70.150.10:FF:000003">
    <property type="entry name" value="Sodium/potassium-transporting ATPase subunit alpha"/>
    <property type="match status" value="1"/>
</dbReference>
<dbReference type="FunFam" id="3.40.1110.10:FF:000001">
    <property type="entry name" value="Sodium/potassium-transporting ATPase subunit alpha"/>
    <property type="match status" value="1"/>
</dbReference>
<dbReference type="FunFam" id="3.40.50.1000:FF:000004">
    <property type="entry name" value="Sodium/potassium-transporting ATPase subunit alpha"/>
    <property type="match status" value="1"/>
</dbReference>
<dbReference type="FunFam" id="1.20.1110.10:FF:000095">
    <property type="entry name" value="Sodium/potassium-transporting ATPase subunit alpha-1"/>
    <property type="match status" value="1"/>
</dbReference>
<dbReference type="Gene3D" id="3.40.1110.10">
    <property type="entry name" value="Calcium-transporting ATPase, cytoplasmic domain N"/>
    <property type="match status" value="1"/>
</dbReference>
<dbReference type="Gene3D" id="2.70.150.10">
    <property type="entry name" value="Calcium-transporting ATPase, cytoplasmic transduction domain A"/>
    <property type="match status" value="1"/>
</dbReference>
<dbReference type="Gene3D" id="1.20.1110.10">
    <property type="entry name" value="Calcium-transporting ATPase, transmembrane domain"/>
    <property type="match status" value="1"/>
</dbReference>
<dbReference type="Gene3D" id="3.40.50.1000">
    <property type="entry name" value="HAD superfamily/HAD-like"/>
    <property type="match status" value="1"/>
</dbReference>
<dbReference type="InterPro" id="IPR006068">
    <property type="entry name" value="ATPase_P-typ_cation-transptr_C"/>
</dbReference>
<dbReference type="InterPro" id="IPR004014">
    <property type="entry name" value="ATPase_P-typ_cation-transptr_N"/>
</dbReference>
<dbReference type="InterPro" id="IPR023299">
    <property type="entry name" value="ATPase_P-typ_cyto_dom_N"/>
</dbReference>
<dbReference type="InterPro" id="IPR018303">
    <property type="entry name" value="ATPase_P-typ_P_site"/>
</dbReference>
<dbReference type="InterPro" id="IPR023298">
    <property type="entry name" value="ATPase_P-typ_TM_dom_sf"/>
</dbReference>
<dbReference type="InterPro" id="IPR008250">
    <property type="entry name" value="ATPase_P-typ_transduc_dom_A_sf"/>
</dbReference>
<dbReference type="InterPro" id="IPR050510">
    <property type="entry name" value="Cation_transp_ATPase_P-type"/>
</dbReference>
<dbReference type="InterPro" id="IPR036412">
    <property type="entry name" value="HAD-like_sf"/>
</dbReference>
<dbReference type="InterPro" id="IPR023214">
    <property type="entry name" value="HAD_sf"/>
</dbReference>
<dbReference type="InterPro" id="IPR005775">
    <property type="entry name" value="P-type_ATPase_IIC"/>
</dbReference>
<dbReference type="InterPro" id="IPR001757">
    <property type="entry name" value="P_typ_ATPase"/>
</dbReference>
<dbReference type="InterPro" id="IPR044492">
    <property type="entry name" value="P_typ_ATPase_HD_dom"/>
</dbReference>
<dbReference type="NCBIfam" id="TIGR01106">
    <property type="entry name" value="ATPase-IIC_X-K"/>
    <property type="match status" value="1"/>
</dbReference>
<dbReference type="NCBIfam" id="TIGR01494">
    <property type="entry name" value="ATPase_P-type"/>
    <property type="match status" value="2"/>
</dbReference>
<dbReference type="PANTHER" id="PTHR43294:SF10">
    <property type="entry name" value="POTASSIUM-TRANSPORTING ATPASE ALPHA CHAIN 1"/>
    <property type="match status" value="1"/>
</dbReference>
<dbReference type="PANTHER" id="PTHR43294">
    <property type="entry name" value="SODIUM/POTASSIUM-TRANSPORTING ATPASE SUBUNIT ALPHA"/>
    <property type="match status" value="1"/>
</dbReference>
<dbReference type="Pfam" id="PF13246">
    <property type="entry name" value="Cation_ATPase"/>
    <property type="match status" value="1"/>
</dbReference>
<dbReference type="Pfam" id="PF00689">
    <property type="entry name" value="Cation_ATPase_C"/>
    <property type="match status" value="1"/>
</dbReference>
<dbReference type="Pfam" id="PF00690">
    <property type="entry name" value="Cation_ATPase_N"/>
    <property type="match status" value="1"/>
</dbReference>
<dbReference type="Pfam" id="PF00122">
    <property type="entry name" value="E1-E2_ATPase"/>
    <property type="match status" value="1"/>
</dbReference>
<dbReference type="Pfam" id="PF00702">
    <property type="entry name" value="Hydrolase"/>
    <property type="match status" value="1"/>
</dbReference>
<dbReference type="PRINTS" id="PR00119">
    <property type="entry name" value="CATATPASE"/>
</dbReference>
<dbReference type="PRINTS" id="PR00121">
    <property type="entry name" value="NAKATPASE"/>
</dbReference>
<dbReference type="SFLD" id="SFLDS00003">
    <property type="entry name" value="Haloacid_Dehalogenase"/>
    <property type="match status" value="1"/>
</dbReference>
<dbReference type="SFLD" id="SFLDF00027">
    <property type="entry name" value="p-type_atpase"/>
    <property type="match status" value="1"/>
</dbReference>
<dbReference type="SMART" id="SM00831">
    <property type="entry name" value="Cation_ATPase_N"/>
    <property type="match status" value="1"/>
</dbReference>
<dbReference type="SUPFAM" id="SSF81653">
    <property type="entry name" value="Calcium ATPase, transduction domain A"/>
    <property type="match status" value="1"/>
</dbReference>
<dbReference type="SUPFAM" id="SSF81665">
    <property type="entry name" value="Calcium ATPase, transmembrane domain M"/>
    <property type="match status" value="1"/>
</dbReference>
<dbReference type="SUPFAM" id="SSF56784">
    <property type="entry name" value="HAD-like"/>
    <property type="match status" value="1"/>
</dbReference>
<dbReference type="SUPFAM" id="SSF81660">
    <property type="entry name" value="Metal cation-transporting ATPase, ATP-binding domain N"/>
    <property type="match status" value="1"/>
</dbReference>
<dbReference type="PROSITE" id="PS00154">
    <property type="entry name" value="ATPASE_E1_E2"/>
    <property type="match status" value="1"/>
</dbReference>
<protein>
    <recommendedName>
        <fullName>Potassium-transporting ATPase alpha chain 1</fullName>
        <ecNumber>7.2.2.19</ecNumber>
    </recommendedName>
    <alternativeName>
        <fullName>Gastric H(+)/K(+) ATPase subunit alpha</fullName>
    </alternativeName>
    <alternativeName>
        <fullName>Proton pump</fullName>
    </alternativeName>
</protein>
<accession>Q92126</accession>
<sequence length="1031" mass="115037">MGKKEQYDMYSVEMEREGDGAMDVKVMKKNKASKKKEKLESMKKEMDINDHEITVEELEQKYTTSVSKGLKSAFAAEVILRDGPNELKPPKGTPEYIKFARQLAGGLQCLMWVAAVICLIAFGIEESQGDLTSADNLYLAITLIAVVVVTGCFGYYQEFKSTNIIASFKNLVPQQATVVRDGDKFQINANQLVVGDLVEIKGGDRVPADIRIITSQGCKVDNSSLTGESEPQTRSPEYTHESPLETRNIAFFSTMCLEGTATGIIINTGDRTIIGRIATLASGVGNEKTPIAIEIEHFVDIIAGLAIFFGATFFVVAMVIGYTFLRAMVFFMAIVVAYVPEGLLATVTVCLSLTAKRLARKNCVVKNLEAVETLGSTSVICSDKTGTLTQNRMTVSHLWFDNHIHSADTTEDQSGQSFDQTSDTWRALSKVVSLCNRAFFKSGQDGIPVPKRIVIGDASETALVKFSEITVGNVMEYRERFKKVTEVPFNSTNKFQLSIHELQDPLDLRYLMVMKGAPERILERCSTIMIKGQELPLDEQWKEAFQTAYMDLGGLGERVLGFCHLYLNEKEYSRGFNFDTEEMNFPTSGLCFAGLISMIDPPRATVPDAVMKCRTAGIRVIMVTGDHPITAKAIAASVGIISEGSETVEDIAARLRIPVEQVNKRDARACVINGGQLKEMSSEELVEALKLHPEMVFARTSPQQKLIIVESCQKLGAIVAVTGDGVNDSPALKKADIGVAMGIAGSDAAKNAADMILLDDNFASIVTGVEQGRLIFDNLKKSIAYTLTKNIPELAPYLIYITASVPLPLGCITILFIELCTDIFPSVSLAYERAESDIMHLKPRNPRRDRLVNEALAVYSYFQIGIIQSFAGFVDYFTVMAQEGWFPAYVLGLRSHWENQHLQDLQDSYGQEWTFSQRLYQQYTCYTVFFISYEICQISDVLIRKTRRLSVFQQGFFRNKVLVIAIVFQLCLGNFLCYCPGMPNVFNFMPIRFQWWLVPLPFGILIFVYDEIRKLGVRRHPGSWFDKEMYY</sequence>
<feature type="initiator methionine" description="Removed" evidence="1">
    <location>
        <position position="1"/>
    </location>
</feature>
<feature type="chain" id="PRO_0000046258" description="Potassium-transporting ATPase alpha chain 1">
    <location>
        <begin position="2"/>
        <end position="1031"/>
    </location>
</feature>
<feature type="topological domain" description="Cytoplasmic" evidence="2">
    <location>
        <begin position="2"/>
        <end position="94"/>
    </location>
</feature>
<feature type="transmembrane region" description="Helical" evidence="2">
    <location>
        <begin position="95"/>
        <end position="115"/>
    </location>
</feature>
<feature type="topological domain" description="Lumenal" evidence="2">
    <location>
        <begin position="116"/>
        <end position="138"/>
    </location>
</feature>
<feature type="transmembrane region" description="Helical" evidence="2">
    <location>
        <begin position="139"/>
        <end position="159"/>
    </location>
</feature>
<feature type="topological domain" description="Cytoplasmic" evidence="2">
    <location>
        <begin position="160"/>
        <end position="295"/>
    </location>
</feature>
<feature type="transmembrane region" description="Helical" evidence="2">
    <location>
        <begin position="296"/>
        <end position="315"/>
    </location>
</feature>
<feature type="topological domain" description="Lumenal" evidence="2">
    <location>
        <begin position="316"/>
        <end position="327"/>
    </location>
</feature>
<feature type="transmembrane region" description="Helical" evidence="2">
    <location>
        <begin position="328"/>
        <end position="345"/>
    </location>
</feature>
<feature type="topological domain" description="Cytoplasmic" evidence="2">
    <location>
        <begin position="346"/>
        <end position="779"/>
    </location>
</feature>
<feature type="transmembrane region" description="Helical" evidence="2">
    <location>
        <begin position="780"/>
        <end position="799"/>
    </location>
</feature>
<feature type="topological domain" description="Lumenal" evidence="2">
    <location>
        <begin position="800"/>
        <end position="809"/>
    </location>
</feature>
<feature type="transmembrane region" description="Helical" evidence="2">
    <location>
        <begin position="810"/>
        <end position="830"/>
    </location>
</feature>
<feature type="topological domain" description="Cytoplasmic" evidence="2">
    <location>
        <begin position="831"/>
        <end position="850"/>
    </location>
</feature>
<feature type="transmembrane region" description="Helical" evidence="2">
    <location>
        <begin position="851"/>
        <end position="873"/>
    </location>
</feature>
<feature type="topological domain" description="Lumenal" evidence="2">
    <location>
        <begin position="874"/>
        <end position="925"/>
    </location>
</feature>
<feature type="transmembrane region" description="Helical" evidence="2">
    <location>
        <begin position="926"/>
        <end position="945"/>
    </location>
</feature>
<feature type="topological domain" description="Cytoplasmic" evidence="2">
    <location>
        <begin position="946"/>
        <end position="959"/>
    </location>
</feature>
<feature type="transmembrane region" description="Helical" evidence="2">
    <location>
        <begin position="960"/>
        <end position="978"/>
    </location>
</feature>
<feature type="topological domain" description="Lumenal" evidence="2">
    <location>
        <begin position="979"/>
        <end position="993"/>
    </location>
</feature>
<feature type="transmembrane region" description="Helical" evidence="2">
    <location>
        <begin position="994"/>
        <end position="1014"/>
    </location>
</feature>
<feature type="topological domain" description="Cytoplasmic" evidence="2">
    <location>
        <begin position="1015"/>
        <end position="1031"/>
    </location>
</feature>
<feature type="region of interest" description="Disordered" evidence="3">
    <location>
        <begin position="221"/>
        <end position="241"/>
    </location>
</feature>
<feature type="compositionally biased region" description="Polar residues" evidence="3">
    <location>
        <begin position="221"/>
        <end position="236"/>
    </location>
</feature>
<feature type="active site" description="4-aspartylphosphate intermediate" evidence="1">
    <location>
        <position position="383"/>
    </location>
</feature>
<feature type="binding site" evidence="1">
    <location>
        <position position="724"/>
    </location>
    <ligand>
        <name>Mg(2+)</name>
        <dbReference type="ChEBI" id="CHEBI:18420"/>
    </ligand>
</feature>
<feature type="binding site" evidence="1">
    <location>
        <position position="728"/>
    </location>
    <ligand>
        <name>Mg(2+)</name>
        <dbReference type="ChEBI" id="CHEBI:18420"/>
    </ligand>
</feature>
<feature type="modified residue" description="Phosphoserine; by PKA" evidence="1">
    <location>
        <position position="950"/>
    </location>
</feature>
<gene>
    <name type="primary">atp4a</name>
</gene>
<keyword id="KW-0067">ATP-binding</keyword>
<keyword id="KW-0375">Hydrogen ion transport</keyword>
<keyword id="KW-0406">Ion transport</keyword>
<keyword id="KW-0460">Magnesium</keyword>
<keyword id="KW-0472">Membrane</keyword>
<keyword id="KW-0479">Metal-binding</keyword>
<keyword id="KW-0547">Nucleotide-binding</keyword>
<keyword id="KW-0597">Phosphoprotein</keyword>
<keyword id="KW-0630">Potassium</keyword>
<keyword id="KW-0633">Potassium transport</keyword>
<keyword id="KW-1185">Reference proteome</keyword>
<keyword id="KW-1278">Translocase</keyword>
<keyword id="KW-0812">Transmembrane</keyword>
<keyword id="KW-1133">Transmembrane helix</keyword>
<keyword id="KW-0813">Transport</keyword>
<name>ATP4A_XENLA</name>
<comment type="function">
    <text>Catalyzes the hydrolysis of ATP coupled with the exchange of H(+) and K(+) ions across the plasma membrane. Responsible for acid production in the stomach.</text>
</comment>
<comment type="catalytic activity">
    <reaction>
        <text>K(+)(out) + ATP + H2O + H(+)(in) = K(+)(in) + ADP + phosphate + 2 H(+)(out)</text>
        <dbReference type="Rhea" id="RHEA:22044"/>
        <dbReference type="ChEBI" id="CHEBI:15377"/>
        <dbReference type="ChEBI" id="CHEBI:15378"/>
        <dbReference type="ChEBI" id="CHEBI:29103"/>
        <dbReference type="ChEBI" id="CHEBI:30616"/>
        <dbReference type="ChEBI" id="CHEBI:43474"/>
        <dbReference type="ChEBI" id="CHEBI:456216"/>
        <dbReference type="EC" id="7.2.2.19"/>
    </reaction>
</comment>
<comment type="subunit">
    <text>Composed of two subunits: alpha (catalytic) and beta.</text>
</comment>
<comment type="subcellular location">
    <subcellularLocation>
        <location>Membrane</location>
        <topology>Multi-pass membrane protein</topology>
    </subcellularLocation>
</comment>
<comment type="tissue specificity">
    <text>Exclusively expressed in stomach mucosa.</text>
</comment>
<comment type="similarity">
    <text evidence="4">Belongs to the cation transport ATPase (P-type) (TC 3.A.3) family. Type IIC subfamily.</text>
</comment>
<proteinExistence type="evidence at transcript level"/>